<keyword id="KW-0067">ATP-binding</keyword>
<keyword id="KW-0436">Ligase</keyword>
<keyword id="KW-0460">Magnesium</keyword>
<keyword id="KW-0479">Metal-binding</keyword>
<keyword id="KW-0547">Nucleotide-binding</keyword>
<keyword id="KW-1185">Reference proteome</keyword>
<keyword id="KW-0833">Ubl conjugation pathway</keyword>
<organism>
    <name type="scientific">Mycobacterium bovis (strain ATCC BAA-935 / AF2122/97)</name>
    <dbReference type="NCBI Taxonomy" id="233413"/>
    <lineage>
        <taxon>Bacteria</taxon>
        <taxon>Bacillati</taxon>
        <taxon>Actinomycetota</taxon>
        <taxon>Actinomycetes</taxon>
        <taxon>Mycobacteriales</taxon>
        <taxon>Mycobacteriaceae</taxon>
        <taxon>Mycobacterium</taxon>
        <taxon>Mycobacterium tuberculosis complex</taxon>
    </lineage>
</organism>
<accession>P64944</accession>
<accession>A0A1R3Y072</accession>
<accession>Q10706</accession>
<accession>X2BJF1</accession>
<name>PAFA_MYCBO</name>
<proteinExistence type="inferred from homology"/>
<evidence type="ECO:0000255" key="1">
    <source>
        <dbReference type="HAMAP-Rule" id="MF_02111"/>
    </source>
</evidence>
<feature type="chain" id="PRO_0000103967" description="Pup--protein ligase">
    <location>
        <begin position="1"/>
        <end position="452"/>
    </location>
</feature>
<feature type="active site" description="Proton acceptor" evidence="1">
    <location>
        <position position="57"/>
    </location>
</feature>
<feature type="binding site" evidence="1">
    <location>
        <position position="9"/>
    </location>
    <ligand>
        <name>Mg(2+)</name>
        <dbReference type="ChEBI" id="CHEBI:18420"/>
    </ligand>
</feature>
<feature type="binding site" evidence="1">
    <location>
        <position position="53"/>
    </location>
    <ligand>
        <name>ATP</name>
        <dbReference type="ChEBI" id="CHEBI:30616"/>
    </ligand>
</feature>
<feature type="binding site" evidence="1">
    <location>
        <position position="55"/>
    </location>
    <ligand>
        <name>Mg(2+)</name>
        <dbReference type="ChEBI" id="CHEBI:18420"/>
    </ligand>
</feature>
<feature type="binding site" evidence="1">
    <location>
        <position position="63"/>
    </location>
    <ligand>
        <name>Mg(2+)</name>
        <dbReference type="ChEBI" id="CHEBI:18420"/>
    </ligand>
</feature>
<feature type="binding site" evidence="1">
    <location>
        <position position="66"/>
    </location>
    <ligand>
        <name>ATP</name>
        <dbReference type="ChEBI" id="CHEBI:30616"/>
    </ligand>
</feature>
<feature type="binding site" evidence="1">
    <location>
        <position position="419"/>
    </location>
    <ligand>
        <name>ATP</name>
        <dbReference type="ChEBI" id="CHEBI:30616"/>
    </ligand>
</feature>
<reference key="1">
    <citation type="journal article" date="2003" name="Proc. Natl. Acad. Sci. U.S.A.">
        <title>The complete genome sequence of Mycobacterium bovis.</title>
        <authorList>
            <person name="Garnier T."/>
            <person name="Eiglmeier K."/>
            <person name="Camus J.-C."/>
            <person name="Medina N."/>
            <person name="Mansoor H."/>
            <person name="Pryor M."/>
            <person name="Duthoy S."/>
            <person name="Grondin S."/>
            <person name="Lacroix C."/>
            <person name="Monsempe C."/>
            <person name="Simon S."/>
            <person name="Harris B."/>
            <person name="Atkin R."/>
            <person name="Doggett J."/>
            <person name="Mayes R."/>
            <person name="Keating L."/>
            <person name="Wheeler P.R."/>
            <person name="Parkhill J."/>
            <person name="Barrell B.G."/>
            <person name="Cole S.T."/>
            <person name="Gordon S.V."/>
            <person name="Hewinson R.G."/>
        </authorList>
    </citation>
    <scope>NUCLEOTIDE SEQUENCE [LARGE SCALE GENOMIC DNA]</scope>
    <source>
        <strain>ATCC BAA-935 / AF2122/97</strain>
    </source>
</reference>
<reference key="2">
    <citation type="journal article" date="2017" name="Genome Announc.">
        <title>Updated reference genome sequence and annotation of Mycobacterium bovis AF2122/97.</title>
        <authorList>
            <person name="Malone K.M."/>
            <person name="Farrell D."/>
            <person name="Stuber T.P."/>
            <person name="Schubert O.T."/>
            <person name="Aebersold R."/>
            <person name="Robbe-Austerman S."/>
            <person name="Gordon S.V."/>
        </authorList>
    </citation>
    <scope>NUCLEOTIDE SEQUENCE [LARGE SCALE GENOMIC DNA]</scope>
    <scope>GENOME REANNOTATION</scope>
    <source>
        <strain>ATCC BAA-935 / AF2122/97</strain>
    </source>
</reference>
<dbReference type="EC" id="6.3.1.19" evidence="1"/>
<dbReference type="EMBL" id="LT708304">
    <property type="protein sequence ID" value="SIU00731.1"/>
    <property type="molecule type" value="Genomic_DNA"/>
</dbReference>
<dbReference type="RefSeq" id="NP_855773.1">
    <property type="nucleotide sequence ID" value="NC_002945.3"/>
</dbReference>
<dbReference type="RefSeq" id="WP_003410781.1">
    <property type="nucleotide sequence ID" value="NC_002945.4"/>
</dbReference>
<dbReference type="SMR" id="P64944"/>
<dbReference type="GeneID" id="45426074"/>
<dbReference type="KEGG" id="mbo:BQ2027_MB2124C"/>
<dbReference type="PATRIC" id="fig|233413.5.peg.2335"/>
<dbReference type="UniPathway" id="UPA00997"/>
<dbReference type="UniPathway" id="UPA00998"/>
<dbReference type="Proteomes" id="UP000001419">
    <property type="component" value="Chromosome"/>
</dbReference>
<dbReference type="GO" id="GO:0005524">
    <property type="term" value="F:ATP binding"/>
    <property type="evidence" value="ECO:0007669"/>
    <property type="project" value="UniProtKB-UniRule"/>
</dbReference>
<dbReference type="GO" id="GO:0016879">
    <property type="term" value="F:ligase activity, forming carbon-nitrogen bonds"/>
    <property type="evidence" value="ECO:0007669"/>
    <property type="project" value="InterPro"/>
</dbReference>
<dbReference type="GO" id="GO:0000287">
    <property type="term" value="F:magnesium ion binding"/>
    <property type="evidence" value="ECO:0007669"/>
    <property type="project" value="UniProtKB-UniRule"/>
</dbReference>
<dbReference type="GO" id="GO:0019787">
    <property type="term" value="F:ubiquitin-like protein transferase activity"/>
    <property type="evidence" value="ECO:0007669"/>
    <property type="project" value="UniProtKB-UniRule"/>
</dbReference>
<dbReference type="GO" id="GO:0019941">
    <property type="term" value="P:modification-dependent protein catabolic process"/>
    <property type="evidence" value="ECO:0007669"/>
    <property type="project" value="UniProtKB-UniRule"/>
</dbReference>
<dbReference type="GO" id="GO:0010498">
    <property type="term" value="P:proteasomal protein catabolic process"/>
    <property type="evidence" value="ECO:0007669"/>
    <property type="project" value="UniProtKB-UniRule"/>
</dbReference>
<dbReference type="GO" id="GO:0070490">
    <property type="term" value="P:protein pupylation"/>
    <property type="evidence" value="ECO:0007669"/>
    <property type="project" value="UniProtKB-UniRule"/>
</dbReference>
<dbReference type="HAMAP" id="MF_02111">
    <property type="entry name" value="Pup_ligase"/>
    <property type="match status" value="1"/>
</dbReference>
<dbReference type="InterPro" id="IPR022279">
    <property type="entry name" value="Pup_ligase"/>
</dbReference>
<dbReference type="InterPro" id="IPR004347">
    <property type="entry name" value="Pup_ligase/deamidase"/>
</dbReference>
<dbReference type="NCBIfam" id="TIGR03686">
    <property type="entry name" value="pupylate_PafA"/>
    <property type="match status" value="1"/>
</dbReference>
<dbReference type="PANTHER" id="PTHR42307">
    <property type="entry name" value="PUP DEAMIDASE/DEPUPYLASE"/>
    <property type="match status" value="1"/>
</dbReference>
<dbReference type="PANTHER" id="PTHR42307:SF3">
    <property type="entry name" value="PUP--PROTEIN LIGASE"/>
    <property type="match status" value="1"/>
</dbReference>
<dbReference type="Pfam" id="PF03136">
    <property type="entry name" value="Pup_ligase"/>
    <property type="match status" value="1"/>
</dbReference>
<dbReference type="PIRSF" id="PIRSF018077">
    <property type="entry name" value="UCP018077"/>
    <property type="match status" value="1"/>
</dbReference>
<comment type="function">
    <text evidence="1">Catalyzes the covalent attachment of the prokaryotic ubiquitin-like protein modifier Pup to the proteasomal substrate proteins, thereby targeting them for proteasomal degradation. This tagging system is termed pupylation. The ligation reaction involves the side-chain carboxylate of the C-terminal glutamate of Pup and the side-chain amino group of a substrate lysine.</text>
</comment>
<comment type="catalytic activity">
    <reaction evidence="1">
        <text>ATP + [prokaryotic ubiquitin-like protein]-L-glutamate + [protein]-L-lysine = ADP + phosphate + N(6)-([prokaryotic ubiquitin-like protein]-gamma-L-glutamyl)-[protein]-L-lysine.</text>
        <dbReference type="EC" id="6.3.1.19"/>
    </reaction>
</comment>
<comment type="pathway">
    <text evidence="1">Protein degradation; proteasomal Pup-dependent pathway.</text>
</comment>
<comment type="pathway">
    <text evidence="1">Protein modification; protein pupylation.</text>
</comment>
<comment type="miscellaneous">
    <text evidence="1">The reaction mechanism probably proceeds via the activation of Pup by phosphorylation of its C-terminal glutamate, which is then subject to nucleophilic attack by the substrate lysine, resulting in an isopeptide bond and the release of phosphate as a good leaving group.</text>
</comment>
<comment type="similarity">
    <text evidence="1">Belongs to the Pup ligase/Pup deamidase family. Pup-conjugating enzyme subfamily.</text>
</comment>
<sequence length="452" mass="51384">MQRRIMGIETEFGVTCTFHGHRRLSPDEVARYLFRRVVSWGRSSNVFLRNGARLYLDVGSHPEYATAECDSLVQLVTHDRAGEWVLEDLLVDAEQRLADEGIGGDIYLFKNNTDSAGNSYGCHENYLIVRAGEFSRISDVLLPFLVTRQLICGAGKVLQTPKAATYCLSQRAEHIWEGVSSATTRSRPIINTRDEPHADAEKYRRLHVIVGDSNMSETTTMLKVGTAALVLEMIESGVAFRDFSLDNPIRAIREVSHDVTGRRPVRLAGGRQASALDIQREYYTRAVEHLQTREPNAQIEQVVDLWGRQLDAVESQDFAKVDTEIDWVIKRKLFQRYQDRYDMELSHPKIAQLDLAYHDIKRGRGIFDLLQRKGLAARVTTDEEIAEAVDQPPQTTRARLRGEFISAAQEAGRDFTVDWVHLKLNDQAQRTVLCKDPFRAVDERVKRLIASM</sequence>
<protein>
    <recommendedName>
        <fullName evidence="1">Pup--protein ligase</fullName>
        <ecNumber evidence="1">6.3.1.19</ecNumber>
    </recommendedName>
    <alternativeName>
        <fullName evidence="1">Proteasome accessory factor A</fullName>
    </alternativeName>
    <alternativeName>
        <fullName evidence="1">Pup-conjugating enzyme</fullName>
    </alternativeName>
</protein>
<gene>
    <name evidence="1" type="primary">pafA</name>
    <name type="ordered locus">BQ2027_MB2124C</name>
</gene>